<dbReference type="EC" id="4.1.2.19" evidence="1"/>
<dbReference type="EMBL" id="AE016827">
    <property type="protein sequence ID" value="AAU38934.1"/>
    <property type="molecule type" value="Genomic_DNA"/>
</dbReference>
<dbReference type="RefSeq" id="WP_011201472.1">
    <property type="nucleotide sequence ID" value="NC_006300.1"/>
</dbReference>
<dbReference type="SMR" id="Q65Q26"/>
<dbReference type="STRING" id="221988.MS2327"/>
<dbReference type="KEGG" id="msu:MS2327"/>
<dbReference type="eggNOG" id="COG0235">
    <property type="taxonomic scope" value="Bacteria"/>
</dbReference>
<dbReference type="HOGENOM" id="CLU_076831_0_0_6"/>
<dbReference type="OrthoDB" id="9784634at2"/>
<dbReference type="UniPathway" id="UPA00541">
    <property type="reaction ID" value="UER00603"/>
</dbReference>
<dbReference type="Proteomes" id="UP000000607">
    <property type="component" value="Chromosome"/>
</dbReference>
<dbReference type="GO" id="GO:0005829">
    <property type="term" value="C:cytosol"/>
    <property type="evidence" value="ECO:0007669"/>
    <property type="project" value="TreeGrafter"/>
</dbReference>
<dbReference type="GO" id="GO:0046872">
    <property type="term" value="F:metal ion binding"/>
    <property type="evidence" value="ECO:0007669"/>
    <property type="project" value="UniProtKB-KW"/>
</dbReference>
<dbReference type="GO" id="GO:0008994">
    <property type="term" value="F:rhamnulose-1-phosphate aldolase activity"/>
    <property type="evidence" value="ECO:0007669"/>
    <property type="project" value="UniProtKB-UniRule"/>
</dbReference>
<dbReference type="GO" id="GO:0019323">
    <property type="term" value="P:pentose catabolic process"/>
    <property type="evidence" value="ECO:0007669"/>
    <property type="project" value="TreeGrafter"/>
</dbReference>
<dbReference type="GO" id="GO:0019301">
    <property type="term" value="P:rhamnose catabolic process"/>
    <property type="evidence" value="ECO:0007669"/>
    <property type="project" value="UniProtKB-UniRule"/>
</dbReference>
<dbReference type="Gene3D" id="3.40.225.10">
    <property type="entry name" value="Class II aldolase/adducin N-terminal domain"/>
    <property type="match status" value="1"/>
</dbReference>
<dbReference type="HAMAP" id="MF_00770">
    <property type="entry name" value="RhaD"/>
    <property type="match status" value="1"/>
</dbReference>
<dbReference type="InterPro" id="IPR050197">
    <property type="entry name" value="Aldolase_class_II_sugar_metab"/>
</dbReference>
<dbReference type="InterPro" id="IPR001303">
    <property type="entry name" value="Aldolase_II/adducin_N"/>
</dbReference>
<dbReference type="InterPro" id="IPR036409">
    <property type="entry name" value="Aldolase_II/adducin_N_sf"/>
</dbReference>
<dbReference type="InterPro" id="IPR013447">
    <property type="entry name" value="Rhamnulose-1-P_Aldolase"/>
</dbReference>
<dbReference type="NCBIfam" id="NF002963">
    <property type="entry name" value="PRK03634.1"/>
    <property type="match status" value="1"/>
</dbReference>
<dbReference type="NCBIfam" id="TIGR02624">
    <property type="entry name" value="rhamnu_1P_ald"/>
    <property type="match status" value="1"/>
</dbReference>
<dbReference type="PANTHER" id="PTHR22789">
    <property type="entry name" value="FUCULOSE PHOSPHATE ALDOLASE"/>
    <property type="match status" value="1"/>
</dbReference>
<dbReference type="PANTHER" id="PTHR22789:SF16">
    <property type="entry name" value="RHAMNULOSE-1-PHOSPHATE ALDOLASE"/>
    <property type="match status" value="1"/>
</dbReference>
<dbReference type="Pfam" id="PF00596">
    <property type="entry name" value="Aldolase_II"/>
    <property type="match status" value="1"/>
</dbReference>
<dbReference type="SMART" id="SM01007">
    <property type="entry name" value="Aldolase_II"/>
    <property type="match status" value="1"/>
</dbReference>
<dbReference type="SUPFAM" id="SSF53639">
    <property type="entry name" value="AraD/HMP-PK domain-like"/>
    <property type="match status" value="1"/>
</dbReference>
<accession>Q65Q26</accession>
<sequence>MQNIINSWFVQGMIKATYDMWLKGWDERNGGNVSLRLLDDDVVSYKDEFYQNPRHVEITQNITALANQYFIVTGSGKFFRNVIIDPADTLAVIKVDEQGKGYYIMWGLVNGGVPTSELPAHLQSHIVRMKVSGGKDRVIMHCHATNLIALTYVLELDPKVITRELWEMSTECLVVFPDGVGVLPWMTPGKDEIGYATAQEMAQHPLVLWAFHGVFGTGPTLDDAFGLIDTAEKSAEILVKVLSMGGKRQTIQTDEFKLLAERFGVTPMDGVL</sequence>
<evidence type="ECO:0000255" key="1">
    <source>
        <dbReference type="HAMAP-Rule" id="MF_00770"/>
    </source>
</evidence>
<keyword id="KW-0963">Cytoplasm</keyword>
<keyword id="KW-0456">Lyase</keyword>
<keyword id="KW-0479">Metal-binding</keyword>
<keyword id="KW-0684">Rhamnose metabolism</keyword>
<keyword id="KW-0862">Zinc</keyword>
<organism>
    <name type="scientific">Mannheimia succiniciproducens (strain KCTC 0769BP / MBEL55E)</name>
    <dbReference type="NCBI Taxonomy" id="221988"/>
    <lineage>
        <taxon>Bacteria</taxon>
        <taxon>Pseudomonadati</taxon>
        <taxon>Pseudomonadota</taxon>
        <taxon>Gammaproteobacteria</taxon>
        <taxon>Pasteurellales</taxon>
        <taxon>Pasteurellaceae</taxon>
        <taxon>Basfia</taxon>
    </lineage>
</organism>
<reference key="1">
    <citation type="journal article" date="2004" name="Nat. Biotechnol.">
        <title>The genome sequence of the capnophilic rumen bacterium Mannheimia succiniciproducens.</title>
        <authorList>
            <person name="Hong S.H."/>
            <person name="Kim J.S."/>
            <person name="Lee S.Y."/>
            <person name="In Y.H."/>
            <person name="Choi S.S."/>
            <person name="Rih J.-K."/>
            <person name="Kim C.H."/>
            <person name="Jeong H."/>
            <person name="Hur C.G."/>
            <person name="Kim J.J."/>
        </authorList>
    </citation>
    <scope>NUCLEOTIDE SEQUENCE [LARGE SCALE GENOMIC DNA]</scope>
    <source>
        <strain>KCTC 0769BP / MBEL55E</strain>
    </source>
</reference>
<proteinExistence type="inferred from homology"/>
<protein>
    <recommendedName>
        <fullName evidence="1">Rhamnulose-1-phosphate aldolase</fullName>
        <ecNumber evidence="1">4.1.2.19</ecNumber>
    </recommendedName>
</protein>
<name>RHAD_MANSM</name>
<gene>
    <name evidence="1" type="primary">rhaD</name>
    <name type="ordered locus">MS2327</name>
</gene>
<feature type="chain" id="PRO_0000209666" description="Rhamnulose-1-phosphate aldolase">
    <location>
        <begin position="1"/>
        <end position="272"/>
    </location>
</feature>
<feature type="active site" evidence="1">
    <location>
        <position position="117"/>
    </location>
</feature>
<feature type="binding site" evidence="1">
    <location>
        <position position="141"/>
    </location>
    <ligand>
        <name>Zn(2+)</name>
        <dbReference type="ChEBI" id="CHEBI:29105"/>
    </ligand>
</feature>
<feature type="binding site" evidence="1">
    <location>
        <position position="143"/>
    </location>
    <ligand>
        <name>Zn(2+)</name>
        <dbReference type="ChEBI" id="CHEBI:29105"/>
    </ligand>
</feature>
<feature type="binding site" evidence="1">
    <location>
        <position position="212"/>
    </location>
    <ligand>
        <name>Zn(2+)</name>
        <dbReference type="ChEBI" id="CHEBI:29105"/>
    </ligand>
</feature>
<comment type="function">
    <text evidence="1">Catalyzes the reversible cleavage of L-rhamnulose-1-phosphate to dihydroxyacetone phosphate (DHAP) and L-lactaldehyde.</text>
</comment>
<comment type="catalytic activity">
    <reaction evidence="1">
        <text>L-rhamnulose 1-phosphate = (S)-lactaldehyde + dihydroxyacetone phosphate</text>
        <dbReference type="Rhea" id="RHEA:19689"/>
        <dbReference type="ChEBI" id="CHEBI:18041"/>
        <dbReference type="ChEBI" id="CHEBI:57642"/>
        <dbReference type="ChEBI" id="CHEBI:58313"/>
        <dbReference type="EC" id="4.1.2.19"/>
    </reaction>
</comment>
<comment type="cofactor">
    <cofactor evidence="1">
        <name>Zn(2+)</name>
        <dbReference type="ChEBI" id="CHEBI:29105"/>
    </cofactor>
    <text evidence="1">Binds 1 zinc ion per subunit.</text>
</comment>
<comment type="pathway">
    <text evidence="1">Carbohydrate degradation; L-rhamnose degradation; glycerone phosphate from L-rhamnose: step 3/3.</text>
</comment>
<comment type="subcellular location">
    <subcellularLocation>
        <location evidence="1">Cytoplasm</location>
    </subcellularLocation>
</comment>
<comment type="similarity">
    <text evidence="1">Belongs to the aldolase class II family. RhaD subfamily.</text>
</comment>